<reference key="1">
    <citation type="journal article" date="2008" name="J. Bacteriol.">
        <title>Genome sequence of Lactobacillus helveticus: an organism distinguished by selective gene loss and IS element expansion.</title>
        <authorList>
            <person name="Callanan M."/>
            <person name="Kaleta P."/>
            <person name="O'Callaghan J."/>
            <person name="O'Sullivan O."/>
            <person name="Jordan K."/>
            <person name="McAuliffe O."/>
            <person name="Sangrador-Vegas A."/>
            <person name="Slattery L."/>
            <person name="Fitzgerald G.F."/>
            <person name="Beresford T."/>
            <person name="Ross R.P."/>
        </authorList>
    </citation>
    <scope>NUCLEOTIDE SEQUENCE [LARGE SCALE GENOMIC DNA]</scope>
    <source>
        <strain>DPC 4571</strain>
    </source>
</reference>
<feature type="chain" id="PRO_1000071185" description="Peptide chain release factor 3">
    <location>
        <begin position="1"/>
        <end position="523"/>
    </location>
</feature>
<feature type="domain" description="tr-type G">
    <location>
        <begin position="10"/>
        <end position="277"/>
    </location>
</feature>
<feature type="binding site" evidence="1">
    <location>
        <begin position="19"/>
        <end position="26"/>
    </location>
    <ligand>
        <name>GTP</name>
        <dbReference type="ChEBI" id="CHEBI:37565"/>
    </ligand>
</feature>
<feature type="binding site" evidence="1">
    <location>
        <begin position="87"/>
        <end position="91"/>
    </location>
    <ligand>
        <name>GTP</name>
        <dbReference type="ChEBI" id="CHEBI:37565"/>
    </ligand>
</feature>
<feature type="binding site" evidence="1">
    <location>
        <begin position="141"/>
        <end position="144"/>
    </location>
    <ligand>
        <name>GTP</name>
        <dbReference type="ChEBI" id="CHEBI:37565"/>
    </ligand>
</feature>
<protein>
    <recommendedName>
        <fullName evidence="1">Peptide chain release factor 3</fullName>
        <shortName evidence="1">RF-3</shortName>
    </recommendedName>
</protein>
<comment type="function">
    <text evidence="1">Increases the formation of ribosomal termination complexes and stimulates activities of RF-1 and RF-2. It binds guanine nucleotides and has strong preference for UGA stop codons. It may interact directly with the ribosome. The stimulation of RF-1 and RF-2 is significantly reduced by GTP and GDP, but not by GMP.</text>
</comment>
<comment type="subcellular location">
    <subcellularLocation>
        <location evidence="1">Cytoplasm</location>
    </subcellularLocation>
</comment>
<comment type="similarity">
    <text evidence="1">Belongs to the TRAFAC class translation factor GTPase superfamily. Classic translation factor GTPase family. PrfC subfamily.</text>
</comment>
<evidence type="ECO:0000255" key="1">
    <source>
        <dbReference type="HAMAP-Rule" id="MF_00072"/>
    </source>
</evidence>
<dbReference type="EMBL" id="CP000517">
    <property type="protein sequence ID" value="ABX26828.1"/>
    <property type="molecule type" value="Genomic_DNA"/>
</dbReference>
<dbReference type="RefSeq" id="WP_003627787.1">
    <property type="nucleotide sequence ID" value="NC_010080.1"/>
</dbReference>
<dbReference type="SMR" id="A8YU90"/>
<dbReference type="KEGG" id="lhe:lhv_0681"/>
<dbReference type="eggNOG" id="COG4108">
    <property type="taxonomic scope" value="Bacteria"/>
</dbReference>
<dbReference type="HOGENOM" id="CLU_002794_2_1_9"/>
<dbReference type="Proteomes" id="UP000000790">
    <property type="component" value="Chromosome"/>
</dbReference>
<dbReference type="GO" id="GO:0005829">
    <property type="term" value="C:cytosol"/>
    <property type="evidence" value="ECO:0007669"/>
    <property type="project" value="TreeGrafter"/>
</dbReference>
<dbReference type="GO" id="GO:0005525">
    <property type="term" value="F:GTP binding"/>
    <property type="evidence" value="ECO:0007669"/>
    <property type="project" value="UniProtKB-UniRule"/>
</dbReference>
<dbReference type="GO" id="GO:0003924">
    <property type="term" value="F:GTPase activity"/>
    <property type="evidence" value="ECO:0007669"/>
    <property type="project" value="InterPro"/>
</dbReference>
<dbReference type="GO" id="GO:0016150">
    <property type="term" value="F:translation release factor activity, codon nonspecific"/>
    <property type="evidence" value="ECO:0007669"/>
    <property type="project" value="TreeGrafter"/>
</dbReference>
<dbReference type="GO" id="GO:0016149">
    <property type="term" value="F:translation release factor activity, codon specific"/>
    <property type="evidence" value="ECO:0007669"/>
    <property type="project" value="UniProtKB-UniRule"/>
</dbReference>
<dbReference type="GO" id="GO:0006449">
    <property type="term" value="P:regulation of translational termination"/>
    <property type="evidence" value="ECO:0007669"/>
    <property type="project" value="UniProtKB-UniRule"/>
</dbReference>
<dbReference type="CDD" id="cd04169">
    <property type="entry name" value="RF3"/>
    <property type="match status" value="1"/>
</dbReference>
<dbReference type="CDD" id="cd16259">
    <property type="entry name" value="RF3_III"/>
    <property type="match status" value="1"/>
</dbReference>
<dbReference type="FunFam" id="3.30.70.3280:FF:000001">
    <property type="entry name" value="Peptide chain release factor 3"/>
    <property type="match status" value="1"/>
</dbReference>
<dbReference type="FunFam" id="3.40.50.300:FF:000542">
    <property type="entry name" value="Peptide chain release factor 3"/>
    <property type="match status" value="1"/>
</dbReference>
<dbReference type="Gene3D" id="3.40.50.300">
    <property type="entry name" value="P-loop containing nucleotide triphosphate hydrolases"/>
    <property type="match status" value="1"/>
</dbReference>
<dbReference type="Gene3D" id="3.30.70.3280">
    <property type="entry name" value="Peptide chain release factor 3, domain III"/>
    <property type="match status" value="1"/>
</dbReference>
<dbReference type="Gene3D" id="2.40.30.10">
    <property type="entry name" value="Translation factors"/>
    <property type="match status" value="1"/>
</dbReference>
<dbReference type="HAMAP" id="MF_00072">
    <property type="entry name" value="Rel_fac_3"/>
    <property type="match status" value="1"/>
</dbReference>
<dbReference type="InterPro" id="IPR053905">
    <property type="entry name" value="EF-G-like_DII"/>
</dbReference>
<dbReference type="InterPro" id="IPR035647">
    <property type="entry name" value="EFG_III/V"/>
</dbReference>
<dbReference type="InterPro" id="IPR031157">
    <property type="entry name" value="G_TR_CS"/>
</dbReference>
<dbReference type="InterPro" id="IPR027417">
    <property type="entry name" value="P-loop_NTPase"/>
</dbReference>
<dbReference type="InterPro" id="IPR004548">
    <property type="entry name" value="PrfC"/>
</dbReference>
<dbReference type="InterPro" id="IPR032090">
    <property type="entry name" value="RF3_C"/>
</dbReference>
<dbReference type="InterPro" id="IPR038467">
    <property type="entry name" value="RF3_dom_3_sf"/>
</dbReference>
<dbReference type="InterPro" id="IPR041732">
    <property type="entry name" value="RF3_GTP-bd"/>
</dbReference>
<dbReference type="InterPro" id="IPR005225">
    <property type="entry name" value="Small_GTP-bd"/>
</dbReference>
<dbReference type="InterPro" id="IPR000795">
    <property type="entry name" value="T_Tr_GTP-bd_dom"/>
</dbReference>
<dbReference type="InterPro" id="IPR009000">
    <property type="entry name" value="Transl_B-barrel_sf"/>
</dbReference>
<dbReference type="NCBIfam" id="TIGR00503">
    <property type="entry name" value="prfC"/>
    <property type="match status" value="1"/>
</dbReference>
<dbReference type="NCBIfam" id="NF001964">
    <property type="entry name" value="PRK00741.1"/>
    <property type="match status" value="1"/>
</dbReference>
<dbReference type="NCBIfam" id="TIGR00231">
    <property type="entry name" value="small_GTP"/>
    <property type="match status" value="1"/>
</dbReference>
<dbReference type="PANTHER" id="PTHR43556">
    <property type="entry name" value="PEPTIDE CHAIN RELEASE FACTOR RF3"/>
    <property type="match status" value="1"/>
</dbReference>
<dbReference type="PANTHER" id="PTHR43556:SF2">
    <property type="entry name" value="PEPTIDE CHAIN RELEASE FACTOR RF3"/>
    <property type="match status" value="1"/>
</dbReference>
<dbReference type="Pfam" id="PF22042">
    <property type="entry name" value="EF-G_D2"/>
    <property type="match status" value="1"/>
</dbReference>
<dbReference type="Pfam" id="PF00009">
    <property type="entry name" value="GTP_EFTU"/>
    <property type="match status" value="1"/>
</dbReference>
<dbReference type="Pfam" id="PF16658">
    <property type="entry name" value="RF3_C"/>
    <property type="match status" value="1"/>
</dbReference>
<dbReference type="PRINTS" id="PR00315">
    <property type="entry name" value="ELONGATNFCT"/>
</dbReference>
<dbReference type="SUPFAM" id="SSF54980">
    <property type="entry name" value="EF-G C-terminal domain-like"/>
    <property type="match status" value="1"/>
</dbReference>
<dbReference type="SUPFAM" id="SSF52540">
    <property type="entry name" value="P-loop containing nucleoside triphosphate hydrolases"/>
    <property type="match status" value="1"/>
</dbReference>
<dbReference type="SUPFAM" id="SSF50447">
    <property type="entry name" value="Translation proteins"/>
    <property type="match status" value="1"/>
</dbReference>
<dbReference type="PROSITE" id="PS00301">
    <property type="entry name" value="G_TR_1"/>
    <property type="match status" value="1"/>
</dbReference>
<dbReference type="PROSITE" id="PS51722">
    <property type="entry name" value="G_TR_2"/>
    <property type="match status" value="1"/>
</dbReference>
<gene>
    <name evidence="1" type="primary">prfC</name>
    <name type="ordered locus">lhv_0681</name>
</gene>
<keyword id="KW-0963">Cytoplasm</keyword>
<keyword id="KW-0342">GTP-binding</keyword>
<keyword id="KW-0547">Nucleotide-binding</keyword>
<keyword id="KW-0648">Protein biosynthesis</keyword>
<name>RF3_LACH4</name>
<organism>
    <name type="scientific">Lactobacillus helveticus (strain DPC 4571)</name>
    <dbReference type="NCBI Taxonomy" id="405566"/>
    <lineage>
        <taxon>Bacteria</taxon>
        <taxon>Bacillati</taxon>
        <taxon>Bacillota</taxon>
        <taxon>Bacilli</taxon>
        <taxon>Lactobacillales</taxon>
        <taxon>Lactobacillaceae</taxon>
        <taxon>Lactobacillus</taxon>
    </lineage>
</organism>
<sequence length="523" mass="59271">MDKELAEKVKKRRTFAIISHPDAGKTTITEQMLLFGGVIRKAGTVKARKTGNFATSDWMEIEKKRGISVTSSVMQFEYKGKRINILDTPGHQDFSEDTYRTLMAVDAAVMVIDSAKGIEPQTKKLFKVVKKRGIPIFTFMNKLDRDGRPPLDLIAELEDLLGIEGVAMDWPIGSGQTLKGLYDVANNRVELYRKDGEDRFLPLNEDGTLPDSEPLSQDPQFQDTLDEIELVKEAGNKFDPEKIALGDQTPVFFGSALTNFGVETFLNSFVDLAPAPESHTVNGDEELSPEDPEFSGFVFKIQANMNPHHRDRIAFVRVGSGEFKRGLDVTLARTGKPIRLNNATEFMSSERVQVSDAVAGDIVGLYDTGNFQIGDSIYSGKRKIVYPPLPEFTPELFMRVTAKNVMKQKSFHKGMNQLVQEGAIQLYRNYQTDEYILGAVGQLQFEVFQFRMKNEYNSEVEMNSIGHRVARWIDPEQLDPRMSNSRNLLVKDRYGNPLFLFENEFAERFFHDKYPDVKLTEKL</sequence>
<proteinExistence type="inferred from homology"/>
<accession>A8YU90</accession>